<sequence>MDSGCWLFGGEFEDSVFEERPERRSGPPASYCAKLCEPQWFYEETESSDDVEVLTLKKFKGDLAYRRQEYQKALQEYSSISEKLSSTNFAMKRDVQEGQARCLAHLGRHMEALEIAANLENKATNTDHLTTVLYLQLAICSSLQNLEKTIFCLQKLISLHPFNPWNWGKLAEAYLNLGPALSAALASSQKQHSFTSSDKTIKSFFPHSGKDCLLCFPETLPESSLFSVEANSSNSQKNEKALTNIQNCMAEKRETVLIETQLKACASFIRTRLLLQFTQPQQTSFALERNLRTQQEIEDKMKGFSFKEDTLLLIAEVMGEDIPEKIKDEVHPEVKCVGSVALTALVTVSSEEFEDKWFRKIKDHFCPFENQFHTEIQILA</sequence>
<protein>
    <recommendedName>
        <fullName>Uncharacterized protein C8orf76</fullName>
    </recommendedName>
</protein>
<gene>
    <name type="primary">C8orf76</name>
</gene>
<proteinExistence type="evidence at protein level"/>
<comment type="alternative products">
    <event type="alternative splicing"/>
    <isoform>
        <id>Q96K31-1</id>
        <name>3</name>
        <sequence type="displayed"/>
    </isoform>
    <isoform>
        <id>Q96EF9-1</id>
        <name>2</name>
        <name>ZHX1-C8orf76</name>
        <sequence type="external"/>
    </isoform>
</comment>
<accession>Q96K31</accession>
<accession>Q53HC1</accession>
<evidence type="ECO:0000305" key="1"/>
<reference key="1">
    <citation type="journal article" date="2004" name="Nat. Genet.">
        <title>Complete sequencing and characterization of 21,243 full-length human cDNAs.</title>
        <authorList>
            <person name="Ota T."/>
            <person name="Suzuki Y."/>
            <person name="Nishikawa T."/>
            <person name="Otsuki T."/>
            <person name="Sugiyama T."/>
            <person name="Irie R."/>
            <person name="Wakamatsu A."/>
            <person name="Hayashi K."/>
            <person name="Sato H."/>
            <person name="Nagai K."/>
            <person name="Kimura K."/>
            <person name="Makita H."/>
            <person name="Sekine M."/>
            <person name="Obayashi M."/>
            <person name="Nishi T."/>
            <person name="Shibahara T."/>
            <person name="Tanaka T."/>
            <person name="Ishii S."/>
            <person name="Yamamoto J."/>
            <person name="Saito K."/>
            <person name="Kawai Y."/>
            <person name="Isono Y."/>
            <person name="Nakamura Y."/>
            <person name="Nagahari K."/>
            <person name="Murakami K."/>
            <person name="Yasuda T."/>
            <person name="Iwayanagi T."/>
            <person name="Wagatsuma M."/>
            <person name="Shiratori A."/>
            <person name="Sudo H."/>
            <person name="Hosoiri T."/>
            <person name="Kaku Y."/>
            <person name="Kodaira H."/>
            <person name="Kondo H."/>
            <person name="Sugawara M."/>
            <person name="Takahashi M."/>
            <person name="Kanda K."/>
            <person name="Yokoi T."/>
            <person name="Furuya T."/>
            <person name="Kikkawa E."/>
            <person name="Omura Y."/>
            <person name="Abe K."/>
            <person name="Kamihara K."/>
            <person name="Katsuta N."/>
            <person name="Sato K."/>
            <person name="Tanikawa M."/>
            <person name="Yamazaki M."/>
            <person name="Ninomiya K."/>
            <person name="Ishibashi T."/>
            <person name="Yamashita H."/>
            <person name="Murakawa K."/>
            <person name="Fujimori K."/>
            <person name="Tanai H."/>
            <person name="Kimata M."/>
            <person name="Watanabe M."/>
            <person name="Hiraoka S."/>
            <person name="Chiba Y."/>
            <person name="Ishida S."/>
            <person name="Ono Y."/>
            <person name="Takiguchi S."/>
            <person name="Watanabe S."/>
            <person name="Yosida M."/>
            <person name="Hotuta T."/>
            <person name="Kusano J."/>
            <person name="Kanehori K."/>
            <person name="Takahashi-Fujii A."/>
            <person name="Hara H."/>
            <person name="Tanase T.-O."/>
            <person name="Nomura Y."/>
            <person name="Togiya S."/>
            <person name="Komai F."/>
            <person name="Hara R."/>
            <person name="Takeuchi K."/>
            <person name="Arita M."/>
            <person name="Imose N."/>
            <person name="Musashino K."/>
            <person name="Yuuki H."/>
            <person name="Oshima A."/>
            <person name="Sasaki N."/>
            <person name="Aotsuka S."/>
            <person name="Yoshikawa Y."/>
            <person name="Matsunawa H."/>
            <person name="Ichihara T."/>
            <person name="Shiohata N."/>
            <person name="Sano S."/>
            <person name="Moriya S."/>
            <person name="Momiyama H."/>
            <person name="Satoh N."/>
            <person name="Takami S."/>
            <person name="Terashima Y."/>
            <person name="Suzuki O."/>
            <person name="Nakagawa S."/>
            <person name="Senoh A."/>
            <person name="Mizoguchi H."/>
            <person name="Goto Y."/>
            <person name="Shimizu F."/>
            <person name="Wakebe H."/>
            <person name="Hishigaki H."/>
            <person name="Watanabe T."/>
            <person name="Sugiyama A."/>
            <person name="Takemoto M."/>
            <person name="Kawakami B."/>
            <person name="Yamazaki M."/>
            <person name="Watanabe K."/>
            <person name="Kumagai A."/>
            <person name="Itakura S."/>
            <person name="Fukuzumi Y."/>
            <person name="Fujimori Y."/>
            <person name="Komiyama M."/>
            <person name="Tashiro H."/>
            <person name="Tanigami A."/>
            <person name="Fujiwara T."/>
            <person name="Ono T."/>
            <person name="Yamada K."/>
            <person name="Fujii Y."/>
            <person name="Ozaki K."/>
            <person name="Hirao M."/>
            <person name="Ohmori Y."/>
            <person name="Kawabata A."/>
            <person name="Hikiji T."/>
            <person name="Kobatake N."/>
            <person name="Inagaki H."/>
            <person name="Ikema Y."/>
            <person name="Okamoto S."/>
            <person name="Okitani R."/>
            <person name="Kawakami T."/>
            <person name="Noguchi S."/>
            <person name="Itoh T."/>
            <person name="Shigeta K."/>
            <person name="Senba T."/>
            <person name="Matsumura K."/>
            <person name="Nakajima Y."/>
            <person name="Mizuno T."/>
            <person name="Morinaga M."/>
            <person name="Sasaki M."/>
            <person name="Togashi T."/>
            <person name="Oyama M."/>
            <person name="Hata H."/>
            <person name="Watanabe M."/>
            <person name="Komatsu T."/>
            <person name="Mizushima-Sugano J."/>
            <person name="Satoh T."/>
            <person name="Shirai Y."/>
            <person name="Takahashi Y."/>
            <person name="Nakagawa K."/>
            <person name="Okumura K."/>
            <person name="Nagase T."/>
            <person name="Nomura N."/>
            <person name="Kikuchi H."/>
            <person name="Masuho Y."/>
            <person name="Yamashita R."/>
            <person name="Nakai K."/>
            <person name="Yada T."/>
            <person name="Nakamura Y."/>
            <person name="Ohara O."/>
            <person name="Isogai T."/>
            <person name="Sugano S."/>
        </authorList>
    </citation>
    <scope>NUCLEOTIDE SEQUENCE [LARGE SCALE MRNA] (ISOFORM 3)</scope>
    <source>
        <tissue>Ovary</tissue>
    </source>
</reference>
<reference key="2">
    <citation type="submission" date="2005-04" db="EMBL/GenBank/DDBJ databases">
        <authorList>
            <person name="Suzuki Y."/>
            <person name="Sugano S."/>
            <person name="Totoki Y."/>
            <person name="Toyoda A."/>
            <person name="Takeda T."/>
            <person name="Sakaki Y."/>
            <person name="Tanaka A."/>
            <person name="Yokoyama S."/>
        </authorList>
    </citation>
    <scope>NUCLEOTIDE SEQUENCE [LARGE SCALE MRNA] (ISOFORM 3)</scope>
    <source>
        <tissue>Cerebellum</tissue>
    </source>
</reference>
<reference key="3">
    <citation type="journal article" date="2006" name="Nature">
        <title>DNA sequence and analysis of human chromosome 8.</title>
        <authorList>
            <person name="Nusbaum C."/>
            <person name="Mikkelsen T.S."/>
            <person name="Zody M.C."/>
            <person name="Asakawa S."/>
            <person name="Taudien S."/>
            <person name="Garber M."/>
            <person name="Kodira C.D."/>
            <person name="Schueler M.G."/>
            <person name="Shimizu A."/>
            <person name="Whittaker C.A."/>
            <person name="Chang J.L."/>
            <person name="Cuomo C.A."/>
            <person name="Dewar K."/>
            <person name="FitzGerald M.G."/>
            <person name="Yang X."/>
            <person name="Allen N.R."/>
            <person name="Anderson S."/>
            <person name="Asakawa T."/>
            <person name="Blechschmidt K."/>
            <person name="Bloom T."/>
            <person name="Borowsky M.L."/>
            <person name="Butler J."/>
            <person name="Cook A."/>
            <person name="Corum B."/>
            <person name="DeArellano K."/>
            <person name="DeCaprio D."/>
            <person name="Dooley K.T."/>
            <person name="Dorris L. III"/>
            <person name="Engels R."/>
            <person name="Gloeckner G."/>
            <person name="Hafez N."/>
            <person name="Hagopian D.S."/>
            <person name="Hall J.L."/>
            <person name="Ishikawa S.K."/>
            <person name="Jaffe D.B."/>
            <person name="Kamat A."/>
            <person name="Kudoh J."/>
            <person name="Lehmann R."/>
            <person name="Lokitsang T."/>
            <person name="Macdonald P."/>
            <person name="Major J.E."/>
            <person name="Matthews C.D."/>
            <person name="Mauceli E."/>
            <person name="Menzel U."/>
            <person name="Mihalev A.H."/>
            <person name="Minoshima S."/>
            <person name="Murayama Y."/>
            <person name="Naylor J.W."/>
            <person name="Nicol R."/>
            <person name="Nguyen C."/>
            <person name="O'Leary S.B."/>
            <person name="O'Neill K."/>
            <person name="Parker S.C.J."/>
            <person name="Polley A."/>
            <person name="Raymond C.K."/>
            <person name="Reichwald K."/>
            <person name="Rodriguez J."/>
            <person name="Sasaki T."/>
            <person name="Schilhabel M."/>
            <person name="Siddiqui R."/>
            <person name="Smith C.L."/>
            <person name="Sneddon T.P."/>
            <person name="Talamas J.A."/>
            <person name="Tenzin P."/>
            <person name="Topham K."/>
            <person name="Venkataraman V."/>
            <person name="Wen G."/>
            <person name="Yamazaki S."/>
            <person name="Young S.K."/>
            <person name="Zeng Q."/>
            <person name="Zimmer A.R."/>
            <person name="Rosenthal A."/>
            <person name="Birren B.W."/>
            <person name="Platzer M."/>
            <person name="Shimizu N."/>
            <person name="Lander E.S."/>
        </authorList>
    </citation>
    <scope>NUCLEOTIDE SEQUENCE [LARGE SCALE GENOMIC DNA]</scope>
</reference>
<reference key="4">
    <citation type="journal article" date="2004" name="Genome Res.">
        <title>The status, quality, and expansion of the NIH full-length cDNA project: the Mammalian Gene Collection (MGC).</title>
        <authorList>
            <consortium name="The MGC Project Team"/>
        </authorList>
    </citation>
    <scope>NUCLEOTIDE SEQUENCE [LARGE SCALE MRNA] (ISOFORM 3)</scope>
    <source>
        <tissue>Brain</tissue>
    </source>
</reference>
<name>CH076_HUMAN</name>
<dbReference type="EMBL" id="AK027731">
    <property type="protein sequence ID" value="BAB55327.1"/>
    <property type="molecule type" value="mRNA"/>
</dbReference>
<dbReference type="EMBL" id="AK222660">
    <property type="protein sequence ID" value="BAD96380.1"/>
    <property type="molecule type" value="mRNA"/>
</dbReference>
<dbReference type="EMBL" id="AC068228">
    <property type="status" value="NOT_ANNOTATED_CDS"/>
    <property type="molecule type" value="Genomic_DNA"/>
</dbReference>
<dbReference type="EMBL" id="BC067796">
    <property type="protein sequence ID" value="AAH67796.1"/>
    <property type="molecule type" value="mRNA"/>
</dbReference>
<dbReference type="CCDS" id="CCDS6341.1">
    <molecule id="Q96K31-1"/>
</dbReference>
<dbReference type="RefSeq" id="NP_116236.1">
    <molecule id="Q96K31-1"/>
    <property type="nucleotide sequence ID" value="NM_032847.3"/>
</dbReference>
<dbReference type="SMR" id="Q96K31"/>
<dbReference type="BioGRID" id="124367">
    <property type="interactions" value="19"/>
</dbReference>
<dbReference type="FunCoup" id="Q96K31">
    <property type="interactions" value="785"/>
</dbReference>
<dbReference type="IntAct" id="Q96K31">
    <property type="interactions" value="9"/>
</dbReference>
<dbReference type="STRING" id="9606.ENSP00000276704"/>
<dbReference type="iPTMnet" id="Q96K31"/>
<dbReference type="PhosphoSitePlus" id="Q96K31"/>
<dbReference type="BioMuta" id="C8orf76"/>
<dbReference type="DMDM" id="74732176"/>
<dbReference type="jPOST" id="Q96K31"/>
<dbReference type="MassIVE" id="Q96K31"/>
<dbReference type="PaxDb" id="9606-ENSP00000276704"/>
<dbReference type="PeptideAtlas" id="Q96K31"/>
<dbReference type="ProteomicsDB" id="77037">
    <molecule id="Q96K31-1"/>
</dbReference>
<dbReference type="Pumba" id="Q96K31"/>
<dbReference type="Antibodypedia" id="13802">
    <property type="antibodies" value="69 antibodies from 12 providers"/>
</dbReference>
<dbReference type="DNASU" id="84933"/>
<dbReference type="Ensembl" id="ENST00000276704.6">
    <molecule id="Q96K31-1"/>
    <property type="protein sequence ID" value="ENSP00000276704.4"/>
    <property type="gene ID" value="ENSG00000189376.12"/>
</dbReference>
<dbReference type="GeneID" id="84933"/>
<dbReference type="KEGG" id="hsa:84933"/>
<dbReference type="MANE-Select" id="ENST00000276704.6">
    <property type="protein sequence ID" value="ENSP00000276704.4"/>
    <property type="RefSeq nucleotide sequence ID" value="NM_032847.3"/>
    <property type="RefSeq protein sequence ID" value="NP_116236.1"/>
</dbReference>
<dbReference type="UCSC" id="uc003yqc.3">
    <molecule id="Q96K31-1"/>
    <property type="organism name" value="human"/>
</dbReference>
<dbReference type="AGR" id="HGNC:25924"/>
<dbReference type="CTD" id="84933"/>
<dbReference type="DisGeNET" id="84933"/>
<dbReference type="GeneCards" id="C8orf76"/>
<dbReference type="HGNC" id="HGNC:25924">
    <property type="gene designation" value="C8orf76"/>
</dbReference>
<dbReference type="HPA" id="ENSG00000189376">
    <property type="expression patterns" value="Low tissue specificity"/>
</dbReference>
<dbReference type="neXtProt" id="NX_Q96K31"/>
<dbReference type="PharmGKB" id="PA142672339"/>
<dbReference type="VEuPathDB" id="HostDB:ENSG00000189376"/>
<dbReference type="eggNOG" id="ENOG502QW95">
    <property type="taxonomic scope" value="Eukaryota"/>
</dbReference>
<dbReference type="GeneTree" id="ENSGT00390000011435"/>
<dbReference type="HOGENOM" id="CLU_044858_0_0_1"/>
<dbReference type="InParanoid" id="Q96K31"/>
<dbReference type="OMA" id="EWIADNN"/>
<dbReference type="OrthoDB" id="6334002at2759"/>
<dbReference type="PAN-GO" id="Q96K31">
    <property type="GO annotations" value="0 GO annotations based on evolutionary models"/>
</dbReference>
<dbReference type="PhylomeDB" id="Q96K31"/>
<dbReference type="TreeFam" id="TF332319"/>
<dbReference type="PathwayCommons" id="Q96K31"/>
<dbReference type="BioGRID-ORCS" id="84933">
    <property type="hits" value="17 hits in 1121 CRISPR screens"/>
</dbReference>
<dbReference type="GenomeRNAi" id="84933"/>
<dbReference type="Pharos" id="Q96K31">
    <property type="development level" value="Tdark"/>
</dbReference>
<dbReference type="PRO" id="PR:Q96K31"/>
<dbReference type="Proteomes" id="UP000005640">
    <property type="component" value="Chromosome 8"/>
</dbReference>
<dbReference type="RNAct" id="Q96K31">
    <property type="molecule type" value="protein"/>
</dbReference>
<dbReference type="Bgee" id="ENSG00000189376">
    <property type="expression patterns" value="Expressed in primordial germ cell in gonad and 103 other cell types or tissues"/>
</dbReference>
<dbReference type="Gene3D" id="1.25.40.10">
    <property type="entry name" value="Tetratricopeptide repeat domain"/>
    <property type="match status" value="1"/>
</dbReference>
<dbReference type="InterPro" id="IPR041404">
    <property type="entry name" value="DUF5588"/>
</dbReference>
<dbReference type="InterPro" id="IPR011990">
    <property type="entry name" value="TPR-like_helical_dom_sf"/>
</dbReference>
<dbReference type="PANTHER" id="PTHR31919">
    <property type="entry name" value="ZINC FINGERS AND HOMEOBOXES PROTEIN 1, ISOFORM 2"/>
    <property type="match status" value="1"/>
</dbReference>
<dbReference type="PANTHER" id="PTHR31919:SF1">
    <property type="entry name" value="ZINC FINGERS AND HOMEOBOXES PROTEIN 1, ISOFORM 2"/>
    <property type="match status" value="1"/>
</dbReference>
<dbReference type="Pfam" id="PF17826">
    <property type="entry name" value="DUF5588"/>
    <property type="match status" value="1"/>
</dbReference>
<dbReference type="SUPFAM" id="SSF48452">
    <property type="entry name" value="TPR-like"/>
    <property type="match status" value="1"/>
</dbReference>
<feature type="chain" id="PRO_0000225635" description="Uncharacterized protein C8orf76">
    <location>
        <begin position="1"/>
        <end position="380"/>
    </location>
</feature>
<feature type="sequence conflict" description="In Ref. 2; BAD96380." evidence="1" ref="2">
    <original>H</original>
    <variation>R</variation>
    <location>
        <position position="373"/>
    </location>
</feature>
<organism>
    <name type="scientific">Homo sapiens</name>
    <name type="common">Human</name>
    <dbReference type="NCBI Taxonomy" id="9606"/>
    <lineage>
        <taxon>Eukaryota</taxon>
        <taxon>Metazoa</taxon>
        <taxon>Chordata</taxon>
        <taxon>Craniata</taxon>
        <taxon>Vertebrata</taxon>
        <taxon>Euteleostomi</taxon>
        <taxon>Mammalia</taxon>
        <taxon>Eutheria</taxon>
        <taxon>Euarchontoglires</taxon>
        <taxon>Primates</taxon>
        <taxon>Haplorrhini</taxon>
        <taxon>Catarrhini</taxon>
        <taxon>Hominidae</taxon>
        <taxon>Homo</taxon>
    </lineage>
</organism>
<keyword id="KW-0025">Alternative splicing</keyword>
<keyword id="KW-1267">Proteomics identification</keyword>
<keyword id="KW-1185">Reference proteome</keyword>